<name>DCD_PSET1</name>
<feature type="chain" id="PRO_1000009785" description="dCTP deaminase">
    <location>
        <begin position="1"/>
        <end position="194"/>
    </location>
</feature>
<feature type="active site" description="Proton donor/acceptor" evidence="1">
    <location>
        <position position="138"/>
    </location>
</feature>
<feature type="binding site" evidence="1">
    <location>
        <begin position="110"/>
        <end position="115"/>
    </location>
    <ligand>
        <name>dCTP</name>
        <dbReference type="ChEBI" id="CHEBI:61481"/>
    </ligand>
</feature>
<feature type="binding site" evidence="1">
    <location>
        <position position="128"/>
    </location>
    <ligand>
        <name>dCTP</name>
        <dbReference type="ChEBI" id="CHEBI:61481"/>
    </ligand>
</feature>
<feature type="binding site" evidence="1">
    <location>
        <begin position="136"/>
        <end position="138"/>
    </location>
    <ligand>
        <name>dCTP</name>
        <dbReference type="ChEBI" id="CHEBI:61481"/>
    </ligand>
</feature>
<feature type="binding site" evidence="1">
    <location>
        <position position="171"/>
    </location>
    <ligand>
        <name>dCTP</name>
        <dbReference type="ChEBI" id="CHEBI:61481"/>
    </ligand>
</feature>
<feature type="binding site" evidence="1">
    <location>
        <position position="178"/>
    </location>
    <ligand>
        <name>dCTP</name>
        <dbReference type="ChEBI" id="CHEBI:61481"/>
    </ligand>
</feature>
<feature type="binding site" evidence="1">
    <location>
        <position position="182"/>
    </location>
    <ligand>
        <name>dCTP</name>
        <dbReference type="ChEBI" id="CHEBI:61481"/>
    </ligand>
</feature>
<evidence type="ECO:0000255" key="1">
    <source>
        <dbReference type="HAMAP-Rule" id="MF_00146"/>
    </source>
</evidence>
<sequence length="194" mass="21449">MRLSDTHIKEYLNDGRIVIEPAPTDEMISGVTADLRLGNKFRTFHAHTAAYVDLSGPKDQLNKAMESIMSDEIVLDEGEAFFLHPGELALAITYEKVTLPADIVGWLDGRSSLARLGLMVHVTAHRIDPGWSGNIVLEFYNSGKLPLALRPMMKIGAMSFETLTGPCANPYNTRKDAKYKDQNSAVASRISDDR</sequence>
<comment type="function">
    <text evidence="1">Catalyzes the deamination of dCTP to dUTP.</text>
</comment>
<comment type="catalytic activity">
    <reaction evidence="1">
        <text>dCTP + H2O + H(+) = dUTP + NH4(+)</text>
        <dbReference type="Rhea" id="RHEA:22680"/>
        <dbReference type="ChEBI" id="CHEBI:15377"/>
        <dbReference type="ChEBI" id="CHEBI:15378"/>
        <dbReference type="ChEBI" id="CHEBI:28938"/>
        <dbReference type="ChEBI" id="CHEBI:61481"/>
        <dbReference type="ChEBI" id="CHEBI:61555"/>
        <dbReference type="EC" id="3.5.4.13"/>
    </reaction>
</comment>
<comment type="pathway">
    <text evidence="1">Pyrimidine metabolism; dUMP biosynthesis; dUMP from dCTP (dUTP route): step 1/2.</text>
</comment>
<comment type="subunit">
    <text evidence="1">Homotrimer.</text>
</comment>
<comment type="similarity">
    <text evidence="1">Belongs to the dCTP deaminase family.</text>
</comment>
<organism>
    <name type="scientific">Pseudoalteromonas translucida (strain TAC 125)</name>
    <dbReference type="NCBI Taxonomy" id="326442"/>
    <lineage>
        <taxon>Bacteria</taxon>
        <taxon>Pseudomonadati</taxon>
        <taxon>Pseudomonadota</taxon>
        <taxon>Gammaproteobacteria</taxon>
        <taxon>Alteromonadales</taxon>
        <taxon>Pseudoalteromonadaceae</taxon>
        <taxon>Pseudoalteromonas</taxon>
    </lineage>
</organism>
<protein>
    <recommendedName>
        <fullName evidence="1">dCTP deaminase</fullName>
        <ecNumber evidence="1">3.5.4.13</ecNumber>
    </recommendedName>
    <alternativeName>
        <fullName evidence="1">Deoxycytidine triphosphate deaminase</fullName>
    </alternativeName>
</protein>
<keyword id="KW-0378">Hydrolase</keyword>
<keyword id="KW-0546">Nucleotide metabolism</keyword>
<keyword id="KW-0547">Nucleotide-binding</keyword>
<keyword id="KW-1185">Reference proteome</keyword>
<accession>Q3IL08</accession>
<reference key="1">
    <citation type="journal article" date="2005" name="Genome Res.">
        <title>Coping with cold: the genome of the versatile marine Antarctica bacterium Pseudoalteromonas haloplanktis TAC125.</title>
        <authorList>
            <person name="Medigue C."/>
            <person name="Krin E."/>
            <person name="Pascal G."/>
            <person name="Barbe V."/>
            <person name="Bernsel A."/>
            <person name="Bertin P.N."/>
            <person name="Cheung F."/>
            <person name="Cruveiller S."/>
            <person name="D'Amico S."/>
            <person name="Duilio A."/>
            <person name="Fang G."/>
            <person name="Feller G."/>
            <person name="Ho C."/>
            <person name="Mangenot S."/>
            <person name="Marino G."/>
            <person name="Nilsson J."/>
            <person name="Parrilli E."/>
            <person name="Rocha E.P.C."/>
            <person name="Rouy Z."/>
            <person name="Sekowska A."/>
            <person name="Tutino M.L."/>
            <person name="Vallenet D."/>
            <person name="von Heijne G."/>
            <person name="Danchin A."/>
        </authorList>
    </citation>
    <scope>NUCLEOTIDE SEQUENCE [LARGE SCALE GENOMIC DNA]</scope>
    <source>
        <strain>TAC 125</strain>
    </source>
</reference>
<gene>
    <name evidence="1" type="primary">dcd</name>
    <name type="ordered locus">PSHAa1319</name>
</gene>
<proteinExistence type="inferred from homology"/>
<dbReference type="EC" id="3.5.4.13" evidence="1"/>
<dbReference type="EMBL" id="CR954246">
    <property type="protein sequence ID" value="CAI86394.1"/>
    <property type="molecule type" value="Genomic_DNA"/>
</dbReference>
<dbReference type="SMR" id="Q3IL08"/>
<dbReference type="STRING" id="326442.PSHAa1319"/>
<dbReference type="KEGG" id="pha:PSHAa1319"/>
<dbReference type="eggNOG" id="COG0717">
    <property type="taxonomic scope" value="Bacteria"/>
</dbReference>
<dbReference type="HOGENOM" id="CLU_087476_2_0_6"/>
<dbReference type="BioCyc" id="PHAL326442:PSHA_RS06495-MONOMER"/>
<dbReference type="UniPathway" id="UPA00610">
    <property type="reaction ID" value="UER00665"/>
</dbReference>
<dbReference type="Proteomes" id="UP000006843">
    <property type="component" value="Chromosome I"/>
</dbReference>
<dbReference type="GO" id="GO:0008829">
    <property type="term" value="F:dCTP deaminase activity"/>
    <property type="evidence" value="ECO:0007669"/>
    <property type="project" value="UniProtKB-UniRule"/>
</dbReference>
<dbReference type="GO" id="GO:0000166">
    <property type="term" value="F:nucleotide binding"/>
    <property type="evidence" value="ECO:0007669"/>
    <property type="project" value="UniProtKB-KW"/>
</dbReference>
<dbReference type="GO" id="GO:0006226">
    <property type="term" value="P:dUMP biosynthetic process"/>
    <property type="evidence" value="ECO:0007669"/>
    <property type="project" value="UniProtKB-UniPathway"/>
</dbReference>
<dbReference type="GO" id="GO:0006229">
    <property type="term" value="P:dUTP biosynthetic process"/>
    <property type="evidence" value="ECO:0007669"/>
    <property type="project" value="UniProtKB-UniRule"/>
</dbReference>
<dbReference type="GO" id="GO:0015949">
    <property type="term" value="P:nucleobase-containing small molecule interconversion"/>
    <property type="evidence" value="ECO:0007669"/>
    <property type="project" value="TreeGrafter"/>
</dbReference>
<dbReference type="CDD" id="cd07557">
    <property type="entry name" value="trimeric_dUTPase"/>
    <property type="match status" value="1"/>
</dbReference>
<dbReference type="FunFam" id="2.70.40.10:FF:000003">
    <property type="entry name" value="dCTP deaminase"/>
    <property type="match status" value="1"/>
</dbReference>
<dbReference type="Gene3D" id="2.70.40.10">
    <property type="match status" value="1"/>
</dbReference>
<dbReference type="HAMAP" id="MF_00146">
    <property type="entry name" value="dCTP_deaminase"/>
    <property type="match status" value="1"/>
</dbReference>
<dbReference type="InterPro" id="IPR011962">
    <property type="entry name" value="dCTP_deaminase"/>
</dbReference>
<dbReference type="InterPro" id="IPR036157">
    <property type="entry name" value="dUTPase-like_sf"/>
</dbReference>
<dbReference type="InterPro" id="IPR033704">
    <property type="entry name" value="dUTPase_trimeric"/>
</dbReference>
<dbReference type="NCBIfam" id="TIGR02274">
    <property type="entry name" value="dCTP_deam"/>
    <property type="match status" value="1"/>
</dbReference>
<dbReference type="PANTHER" id="PTHR42680">
    <property type="entry name" value="DCTP DEAMINASE"/>
    <property type="match status" value="1"/>
</dbReference>
<dbReference type="PANTHER" id="PTHR42680:SF3">
    <property type="entry name" value="DCTP DEAMINASE"/>
    <property type="match status" value="1"/>
</dbReference>
<dbReference type="Pfam" id="PF22769">
    <property type="entry name" value="DCD"/>
    <property type="match status" value="1"/>
</dbReference>
<dbReference type="SUPFAM" id="SSF51283">
    <property type="entry name" value="dUTPase-like"/>
    <property type="match status" value="1"/>
</dbReference>